<proteinExistence type="evidence at transcript level"/>
<accession>A1E960</accession>
<accession>Q9D7E6</accession>
<name>ODAM_MOUSE</name>
<sequence length="273" mass="29820">MKIIILLGLIGASSSAPLISQRLLSASNSHELLLNLNNGQLLPLQFQGAFNSWIPPFPGFLQQQQAQVSGRPQFTLSTLESFAGLFPNQIPLSRQVGLAQGGQAGQPDLSQQQTPPQTQQSASPMSYVVPVKVPQDQTQMFQYYPVYMLLPWEQPQTVTSSPQHTGQQLFEEQIPFYNQFGFAPPQAEPGVPGGQQHLAFDSFVGTAPETPGMPVEGSLLYPQKEPISFKHDNAGVFMPTTSPKPSTDNFFTSGIDPTIAPEQKVKTDSLREP</sequence>
<feature type="signal peptide" evidence="4">
    <location>
        <begin position="1"/>
        <end position="15"/>
    </location>
</feature>
<feature type="chain" id="PRO_5000183880" description="Odontogenic ameloblast-associated protein">
    <location>
        <begin position="16"/>
        <end position="273"/>
    </location>
</feature>
<feature type="region of interest" description="Disordered" evidence="5">
    <location>
        <begin position="100"/>
        <end position="124"/>
    </location>
</feature>
<feature type="region of interest" description="Interaction with ARHGEF5" evidence="2">
    <location>
        <begin position="125"/>
        <end position="127"/>
    </location>
</feature>
<feature type="region of interest" description="Disordered" evidence="5">
    <location>
        <begin position="240"/>
        <end position="273"/>
    </location>
</feature>
<feature type="compositionally biased region" description="Low complexity" evidence="5">
    <location>
        <begin position="110"/>
        <end position="121"/>
    </location>
</feature>
<feature type="compositionally biased region" description="Polar residues" evidence="5">
    <location>
        <begin position="240"/>
        <end position="252"/>
    </location>
</feature>
<feature type="compositionally biased region" description="Basic and acidic residues" evidence="5">
    <location>
        <begin position="263"/>
        <end position="273"/>
    </location>
</feature>
<feature type="glycosylation site" description="O-linked (GalNAc...) threonine" evidence="4">
    <location>
        <position position="114"/>
    </location>
</feature>
<feature type="glycosylation site" description="O-linked (GalNAc...) threonine" evidence="4">
    <location>
        <position position="118"/>
    </location>
</feature>
<feature type="glycosylation site" description="O-linked (GalNAc...) threonine" evidence="4">
    <location>
        <position position="159"/>
    </location>
</feature>
<feature type="glycosylation site" description="O-linked (GalNAc...) threonine" evidence="4">
    <location>
        <position position="240"/>
    </location>
</feature>
<feature type="glycosylation site" description="O-linked (GalNAc...) threonine" evidence="4">
    <location>
        <position position="241"/>
    </location>
</feature>
<feature type="glycosylation site" description="O-linked (GalNAc...) threonine" evidence="4">
    <location>
        <position position="247"/>
    </location>
</feature>
<feature type="glycosylation site" description="O-linked (GalNAc...) threonine" evidence="4">
    <location>
        <position position="252"/>
    </location>
</feature>
<feature type="glycosylation site" description="O-linked (GalNAc...) threonine" evidence="4">
    <location>
        <position position="258"/>
    </location>
</feature>
<feature type="glycosylation site" description="O-linked (GalNAc...) threonine" evidence="4">
    <location>
        <position position="267"/>
    </location>
</feature>
<comment type="function">
    <text evidence="2">Tooth-associated epithelia protein that probably plays a role in odontogenesis, the complex process that results in the initiation and generation of the tooth. May be incorporated in the enamel matrix at the end of mineralization process. Involved in the induction of RHOA activity via interaction with ARHGEF and expression of downstream factors such as ROCK. Plays a role in attachment of the junctional epithelium to the tooth surface.</text>
</comment>
<comment type="subunit">
    <text evidence="2">Interacts (via C-terminus) with ARHGEF5.</text>
</comment>
<comment type="subcellular location">
    <subcellularLocation>
        <location evidence="3">Secreted</location>
    </subcellularLocation>
    <subcellularLocation>
        <location evidence="2">Cytoplasm</location>
    </subcellularLocation>
    <subcellularLocation>
        <location evidence="2">Nucleus</location>
    </subcellularLocation>
</comment>
<comment type="tissue specificity">
    <text evidence="6">Highly expressed in tooth-associated epithelia. Predominantly expressed in mandible.</text>
</comment>
<comment type="developmental stage">
    <text evidence="7">Expressed in first lower molars at birth.</text>
</comment>
<comment type="PTM">
    <text evidence="1">O-glycosylated.</text>
</comment>
<comment type="similarity">
    <text evidence="8">Belongs to the ODAM family.</text>
</comment>
<comment type="sequence caution" evidence="8">
    <conflict type="erroneous initiation">
        <sequence resource="EMBL-CDS" id="AAI32395"/>
    </conflict>
</comment>
<comment type="sequence caution" evidence="8">
    <conflict type="erroneous initiation">
        <sequence resource="EMBL-CDS" id="AAI32397"/>
    </conflict>
</comment>
<comment type="sequence caution" evidence="8">
    <conflict type="erroneous initiation">
        <sequence resource="EMBL-CDS" id="BAB26200"/>
    </conflict>
</comment>
<keyword id="KW-0091">Biomineralization</keyword>
<keyword id="KW-0963">Cytoplasm</keyword>
<keyword id="KW-0325">Glycoprotein</keyword>
<keyword id="KW-0539">Nucleus</keyword>
<keyword id="KW-1185">Reference proteome</keyword>
<keyword id="KW-0964">Secreted</keyword>
<keyword id="KW-0732">Signal</keyword>
<evidence type="ECO:0000250" key="1"/>
<evidence type="ECO:0000250" key="2">
    <source>
        <dbReference type="UniProtKB" id="A1E959"/>
    </source>
</evidence>
<evidence type="ECO:0000250" key="3">
    <source>
        <dbReference type="UniProtKB" id="Q3HS83"/>
    </source>
</evidence>
<evidence type="ECO:0000255" key="4"/>
<evidence type="ECO:0000256" key="5">
    <source>
        <dbReference type="SAM" id="MobiDB-lite"/>
    </source>
</evidence>
<evidence type="ECO:0000269" key="6">
    <source>
    </source>
</evidence>
<evidence type="ECO:0000269" key="7">
    <source>
    </source>
</evidence>
<evidence type="ECO:0000305" key="8"/>
<organism>
    <name type="scientific">Mus musculus</name>
    <name type="common">Mouse</name>
    <dbReference type="NCBI Taxonomy" id="10090"/>
    <lineage>
        <taxon>Eukaryota</taxon>
        <taxon>Metazoa</taxon>
        <taxon>Chordata</taxon>
        <taxon>Craniata</taxon>
        <taxon>Vertebrata</taxon>
        <taxon>Euteleostomi</taxon>
        <taxon>Mammalia</taxon>
        <taxon>Eutheria</taxon>
        <taxon>Euarchontoglires</taxon>
        <taxon>Glires</taxon>
        <taxon>Rodentia</taxon>
        <taxon>Myomorpha</taxon>
        <taxon>Muroidea</taxon>
        <taxon>Muridae</taxon>
        <taxon>Murinae</taxon>
        <taxon>Mus</taxon>
        <taxon>Mus</taxon>
    </lineage>
</organism>
<gene>
    <name type="primary">Odam</name>
    <name type="synonym">Apin</name>
</gene>
<dbReference type="EMBL" id="EF113909">
    <property type="protein sequence ID" value="ABL11578.1"/>
    <property type="molecule type" value="mRNA"/>
</dbReference>
<dbReference type="EMBL" id="AK009298">
    <property type="protein sequence ID" value="BAB26200.1"/>
    <property type="status" value="ALT_INIT"/>
    <property type="molecule type" value="mRNA"/>
</dbReference>
<dbReference type="EMBL" id="BC132394">
    <property type="protein sequence ID" value="AAI32395.1"/>
    <property type="status" value="ALT_INIT"/>
    <property type="molecule type" value="mRNA"/>
</dbReference>
<dbReference type="EMBL" id="BC132396">
    <property type="protein sequence ID" value="AAI32397.1"/>
    <property type="status" value="ALT_INIT"/>
    <property type="molecule type" value="mRNA"/>
</dbReference>
<dbReference type="CCDS" id="CCDS19394.2"/>
<dbReference type="RefSeq" id="NP_081404.2">
    <property type="nucleotide sequence ID" value="NM_027128.3"/>
</dbReference>
<dbReference type="RefSeq" id="XP_006535273.1">
    <property type="nucleotide sequence ID" value="XM_006535210.3"/>
</dbReference>
<dbReference type="FunCoup" id="A1E960">
    <property type="interactions" value="53"/>
</dbReference>
<dbReference type="STRING" id="10090.ENSMUSP00000117898"/>
<dbReference type="GlyCosmos" id="A1E960">
    <property type="glycosylation" value="9 sites, No reported glycans"/>
</dbReference>
<dbReference type="GlyGen" id="A1E960">
    <property type="glycosylation" value="9 sites"/>
</dbReference>
<dbReference type="PhosphoSitePlus" id="A1E960"/>
<dbReference type="PaxDb" id="10090-ENSMUSP00000117898"/>
<dbReference type="Antibodypedia" id="24311">
    <property type="antibodies" value="31 antibodies from 14 providers"/>
</dbReference>
<dbReference type="DNASU" id="69592"/>
<dbReference type="Ensembl" id="ENSMUST00000113274.3">
    <property type="protein sequence ID" value="ENSMUSP00000108899.3"/>
    <property type="gene ID" value="ENSMUSG00000009580.16"/>
</dbReference>
<dbReference type="Ensembl" id="ENSMUST00000129757.9">
    <property type="protein sequence ID" value="ENSMUSP00000117898.3"/>
    <property type="gene ID" value="ENSMUSG00000009580.16"/>
</dbReference>
<dbReference type="GeneID" id="69592"/>
<dbReference type="KEGG" id="mmu:69592"/>
<dbReference type="UCSC" id="uc008xzd.1">
    <property type="organism name" value="mouse"/>
</dbReference>
<dbReference type="AGR" id="MGI:1916842"/>
<dbReference type="CTD" id="54959"/>
<dbReference type="MGI" id="MGI:1916842">
    <property type="gene designation" value="Odam"/>
</dbReference>
<dbReference type="VEuPathDB" id="HostDB:ENSMUSG00000009580"/>
<dbReference type="eggNOG" id="ENOG502RM1P">
    <property type="taxonomic scope" value="Eukaryota"/>
</dbReference>
<dbReference type="GeneTree" id="ENSGT00390000011100"/>
<dbReference type="HOGENOM" id="CLU_096142_0_0_1"/>
<dbReference type="InParanoid" id="A1E960"/>
<dbReference type="OMA" id="PNHVMPY"/>
<dbReference type="OrthoDB" id="9889202at2759"/>
<dbReference type="PhylomeDB" id="A1E960"/>
<dbReference type="TreeFam" id="TF338424"/>
<dbReference type="BioGRID-ORCS" id="69592">
    <property type="hits" value="4 hits in 79 CRISPR screens"/>
</dbReference>
<dbReference type="PRO" id="PR:A1E960"/>
<dbReference type="Proteomes" id="UP000000589">
    <property type="component" value="Chromosome 5"/>
</dbReference>
<dbReference type="RNAct" id="A1E960">
    <property type="molecule type" value="protein"/>
</dbReference>
<dbReference type="Bgee" id="ENSMUSG00000009580">
    <property type="expression patterns" value="Expressed in molar tooth and 23 other cell types or tissues"/>
</dbReference>
<dbReference type="GO" id="GO:0071944">
    <property type="term" value="C:cell periphery"/>
    <property type="evidence" value="ECO:0007669"/>
    <property type="project" value="Ensembl"/>
</dbReference>
<dbReference type="GO" id="GO:0005737">
    <property type="term" value="C:cytoplasm"/>
    <property type="evidence" value="ECO:0000314"/>
    <property type="project" value="MGI"/>
</dbReference>
<dbReference type="GO" id="GO:0005829">
    <property type="term" value="C:cytosol"/>
    <property type="evidence" value="ECO:0007669"/>
    <property type="project" value="Ensembl"/>
</dbReference>
<dbReference type="GO" id="GO:0005576">
    <property type="term" value="C:extracellular region"/>
    <property type="evidence" value="ECO:0000314"/>
    <property type="project" value="MGI"/>
</dbReference>
<dbReference type="GO" id="GO:0005615">
    <property type="term" value="C:extracellular space"/>
    <property type="evidence" value="ECO:0007669"/>
    <property type="project" value="Ensembl"/>
</dbReference>
<dbReference type="GO" id="GO:0072686">
    <property type="term" value="C:mitotic spindle"/>
    <property type="evidence" value="ECO:0007669"/>
    <property type="project" value="Ensembl"/>
</dbReference>
<dbReference type="GO" id="GO:0005654">
    <property type="term" value="C:nucleoplasm"/>
    <property type="evidence" value="ECO:0007669"/>
    <property type="project" value="Ensembl"/>
</dbReference>
<dbReference type="GO" id="GO:0005634">
    <property type="term" value="C:nucleus"/>
    <property type="evidence" value="ECO:0000314"/>
    <property type="project" value="MGI"/>
</dbReference>
<dbReference type="GO" id="GO:0099512">
    <property type="term" value="C:supramolecular fiber"/>
    <property type="evidence" value="ECO:0007669"/>
    <property type="project" value="Ensembl"/>
</dbReference>
<dbReference type="GO" id="GO:0031214">
    <property type="term" value="P:biomineral tissue development"/>
    <property type="evidence" value="ECO:0007669"/>
    <property type="project" value="UniProtKB-KW"/>
</dbReference>
<dbReference type="GO" id="GO:0006954">
    <property type="term" value="P:inflammatory response"/>
    <property type="evidence" value="ECO:0007669"/>
    <property type="project" value="Ensembl"/>
</dbReference>
<dbReference type="GO" id="GO:0042475">
    <property type="term" value="P:odontogenesis of dentin-containing tooth"/>
    <property type="evidence" value="ECO:0007669"/>
    <property type="project" value="Ensembl"/>
</dbReference>
<dbReference type="GO" id="GO:0060054">
    <property type="term" value="P:positive regulation of epithelial cell proliferation involved in wound healing"/>
    <property type="evidence" value="ECO:0007669"/>
    <property type="project" value="Ensembl"/>
</dbReference>
<dbReference type="GO" id="GO:0010628">
    <property type="term" value="P:positive regulation of gene expression"/>
    <property type="evidence" value="ECO:0007669"/>
    <property type="project" value="Ensembl"/>
</dbReference>
<dbReference type="GO" id="GO:0032956">
    <property type="term" value="P:regulation of actin cytoskeleton organization"/>
    <property type="evidence" value="ECO:0007669"/>
    <property type="project" value="Ensembl"/>
</dbReference>
<dbReference type="GO" id="GO:0009611">
    <property type="term" value="P:response to wounding"/>
    <property type="evidence" value="ECO:0000314"/>
    <property type="project" value="UniProtKB"/>
</dbReference>
<dbReference type="InterPro" id="IPR026802">
    <property type="entry name" value="Odam"/>
</dbReference>
<dbReference type="PANTHER" id="PTHR16237">
    <property type="entry name" value="ODONTOGENIC AMELOBLAST-ASSOCIATED PROTEIN"/>
    <property type="match status" value="1"/>
</dbReference>
<dbReference type="PANTHER" id="PTHR16237:SF3">
    <property type="entry name" value="ODONTOGENIC AMELOBLAST-ASSOCIATED PROTEIN"/>
    <property type="match status" value="1"/>
</dbReference>
<dbReference type="Pfam" id="PF15424">
    <property type="entry name" value="ODAM"/>
    <property type="match status" value="1"/>
</dbReference>
<reference key="1">
    <citation type="submission" date="2006-11" db="EMBL/GenBank/DDBJ databases">
        <authorList>
            <person name="Moffatt P."/>
            <person name="Smith C.E."/>
            <person name="Nanci A."/>
        </authorList>
    </citation>
    <scope>NUCLEOTIDE SEQUENCE [MRNA]</scope>
    <source>
        <strain>CD-1</strain>
        <tissue>Mandible</tissue>
    </source>
</reference>
<reference key="2">
    <citation type="journal article" date="2005" name="Science">
        <title>The transcriptional landscape of the mammalian genome.</title>
        <authorList>
            <person name="Carninci P."/>
            <person name="Kasukawa T."/>
            <person name="Katayama S."/>
            <person name="Gough J."/>
            <person name="Frith M.C."/>
            <person name="Maeda N."/>
            <person name="Oyama R."/>
            <person name="Ravasi T."/>
            <person name="Lenhard B."/>
            <person name="Wells C."/>
            <person name="Kodzius R."/>
            <person name="Shimokawa K."/>
            <person name="Bajic V.B."/>
            <person name="Brenner S.E."/>
            <person name="Batalov S."/>
            <person name="Forrest A.R."/>
            <person name="Zavolan M."/>
            <person name="Davis M.J."/>
            <person name="Wilming L.G."/>
            <person name="Aidinis V."/>
            <person name="Allen J.E."/>
            <person name="Ambesi-Impiombato A."/>
            <person name="Apweiler R."/>
            <person name="Aturaliya R.N."/>
            <person name="Bailey T.L."/>
            <person name="Bansal M."/>
            <person name="Baxter L."/>
            <person name="Beisel K.W."/>
            <person name="Bersano T."/>
            <person name="Bono H."/>
            <person name="Chalk A.M."/>
            <person name="Chiu K.P."/>
            <person name="Choudhary V."/>
            <person name="Christoffels A."/>
            <person name="Clutterbuck D.R."/>
            <person name="Crowe M.L."/>
            <person name="Dalla E."/>
            <person name="Dalrymple B.P."/>
            <person name="de Bono B."/>
            <person name="Della Gatta G."/>
            <person name="di Bernardo D."/>
            <person name="Down T."/>
            <person name="Engstrom P."/>
            <person name="Fagiolini M."/>
            <person name="Faulkner G."/>
            <person name="Fletcher C.F."/>
            <person name="Fukushima T."/>
            <person name="Furuno M."/>
            <person name="Futaki S."/>
            <person name="Gariboldi M."/>
            <person name="Georgii-Hemming P."/>
            <person name="Gingeras T.R."/>
            <person name="Gojobori T."/>
            <person name="Green R.E."/>
            <person name="Gustincich S."/>
            <person name="Harbers M."/>
            <person name="Hayashi Y."/>
            <person name="Hensch T.K."/>
            <person name="Hirokawa N."/>
            <person name="Hill D."/>
            <person name="Huminiecki L."/>
            <person name="Iacono M."/>
            <person name="Ikeo K."/>
            <person name="Iwama A."/>
            <person name="Ishikawa T."/>
            <person name="Jakt M."/>
            <person name="Kanapin A."/>
            <person name="Katoh M."/>
            <person name="Kawasawa Y."/>
            <person name="Kelso J."/>
            <person name="Kitamura H."/>
            <person name="Kitano H."/>
            <person name="Kollias G."/>
            <person name="Krishnan S.P."/>
            <person name="Kruger A."/>
            <person name="Kummerfeld S.K."/>
            <person name="Kurochkin I.V."/>
            <person name="Lareau L.F."/>
            <person name="Lazarevic D."/>
            <person name="Lipovich L."/>
            <person name="Liu J."/>
            <person name="Liuni S."/>
            <person name="McWilliam S."/>
            <person name="Madan Babu M."/>
            <person name="Madera M."/>
            <person name="Marchionni L."/>
            <person name="Matsuda H."/>
            <person name="Matsuzawa S."/>
            <person name="Miki H."/>
            <person name="Mignone F."/>
            <person name="Miyake S."/>
            <person name="Morris K."/>
            <person name="Mottagui-Tabar S."/>
            <person name="Mulder N."/>
            <person name="Nakano N."/>
            <person name="Nakauchi H."/>
            <person name="Ng P."/>
            <person name="Nilsson R."/>
            <person name="Nishiguchi S."/>
            <person name="Nishikawa S."/>
            <person name="Nori F."/>
            <person name="Ohara O."/>
            <person name="Okazaki Y."/>
            <person name="Orlando V."/>
            <person name="Pang K.C."/>
            <person name="Pavan W.J."/>
            <person name="Pavesi G."/>
            <person name="Pesole G."/>
            <person name="Petrovsky N."/>
            <person name="Piazza S."/>
            <person name="Reed J."/>
            <person name="Reid J.F."/>
            <person name="Ring B.Z."/>
            <person name="Ringwald M."/>
            <person name="Rost B."/>
            <person name="Ruan Y."/>
            <person name="Salzberg S.L."/>
            <person name="Sandelin A."/>
            <person name="Schneider C."/>
            <person name="Schoenbach C."/>
            <person name="Sekiguchi K."/>
            <person name="Semple C.A."/>
            <person name="Seno S."/>
            <person name="Sessa L."/>
            <person name="Sheng Y."/>
            <person name="Shibata Y."/>
            <person name="Shimada H."/>
            <person name="Shimada K."/>
            <person name="Silva D."/>
            <person name="Sinclair B."/>
            <person name="Sperling S."/>
            <person name="Stupka E."/>
            <person name="Sugiura K."/>
            <person name="Sultana R."/>
            <person name="Takenaka Y."/>
            <person name="Taki K."/>
            <person name="Tammoja K."/>
            <person name="Tan S.L."/>
            <person name="Tang S."/>
            <person name="Taylor M.S."/>
            <person name="Tegner J."/>
            <person name="Teichmann S.A."/>
            <person name="Ueda H.R."/>
            <person name="van Nimwegen E."/>
            <person name="Verardo R."/>
            <person name="Wei C.L."/>
            <person name="Yagi K."/>
            <person name="Yamanishi H."/>
            <person name="Zabarovsky E."/>
            <person name="Zhu S."/>
            <person name="Zimmer A."/>
            <person name="Hide W."/>
            <person name="Bult C."/>
            <person name="Grimmond S.M."/>
            <person name="Teasdale R.D."/>
            <person name="Liu E.T."/>
            <person name="Brusic V."/>
            <person name="Quackenbush J."/>
            <person name="Wahlestedt C."/>
            <person name="Mattick J.S."/>
            <person name="Hume D.A."/>
            <person name="Kai C."/>
            <person name="Sasaki D."/>
            <person name="Tomaru Y."/>
            <person name="Fukuda S."/>
            <person name="Kanamori-Katayama M."/>
            <person name="Suzuki M."/>
            <person name="Aoki J."/>
            <person name="Arakawa T."/>
            <person name="Iida J."/>
            <person name="Imamura K."/>
            <person name="Itoh M."/>
            <person name="Kato T."/>
            <person name="Kawaji H."/>
            <person name="Kawagashira N."/>
            <person name="Kawashima T."/>
            <person name="Kojima M."/>
            <person name="Kondo S."/>
            <person name="Konno H."/>
            <person name="Nakano K."/>
            <person name="Ninomiya N."/>
            <person name="Nishio T."/>
            <person name="Okada M."/>
            <person name="Plessy C."/>
            <person name="Shibata K."/>
            <person name="Shiraki T."/>
            <person name="Suzuki S."/>
            <person name="Tagami M."/>
            <person name="Waki K."/>
            <person name="Watahiki A."/>
            <person name="Okamura-Oho Y."/>
            <person name="Suzuki H."/>
            <person name="Kawai J."/>
            <person name="Hayashizaki Y."/>
        </authorList>
    </citation>
    <scope>NUCLEOTIDE SEQUENCE [LARGE SCALE MRNA] OF 105-273</scope>
    <source>
        <strain>C57BL/6J</strain>
        <tissue>Tongue</tissue>
    </source>
</reference>
<reference key="3">
    <citation type="journal article" date="2004" name="Genome Res.">
        <title>The status, quality, and expansion of the NIH full-length cDNA project: the Mammalian Gene Collection (MGC).</title>
        <authorList>
            <consortium name="The MGC Project Team"/>
        </authorList>
    </citation>
    <scope>NUCLEOTIDE SEQUENCE [LARGE SCALE MRNA] OF 114-273</scope>
    <source>
        <tissue>Brain</tissue>
    </source>
</reference>
<reference key="4">
    <citation type="journal article" date="2008" name="J. Cell. Biochem.">
        <title>Characterization of Apin, a secreted protein highly expressed in tooth-associated epithelia.</title>
        <authorList>
            <person name="Moffatt P."/>
            <person name="Smith C.E."/>
            <person name="St Arnaud R."/>
            <person name="Nanci A."/>
        </authorList>
    </citation>
    <scope>TISSUE SPECIFICITY</scope>
</reference>
<reference key="5">
    <citation type="journal article" date="2011" name="J. Cell Sci.">
        <title>PERP regulates enamel formation via effects on cell-cell adhesion and gene expression.</title>
        <authorList>
            <person name="Jheon A.H."/>
            <person name="Mostowfi P."/>
            <person name="Snead M.L."/>
            <person name="Ihrie R.A."/>
            <person name="Sone E."/>
            <person name="Pramparo T."/>
            <person name="Attardi L.D."/>
            <person name="Klein O.D."/>
        </authorList>
    </citation>
    <scope>DEVELOPMENTAL STAGE</scope>
</reference>
<protein>
    <recommendedName>
        <fullName>Odontogenic ameloblast-associated protein</fullName>
    </recommendedName>
    <alternativeName>
        <fullName>Apin</fullName>
    </alternativeName>
</protein>